<proteinExistence type="inferred from homology"/>
<organism>
    <name type="scientific">Klebsiella pneumoniae subsp. pneumoniae (strain ATCC 700721 / MGH 78578)</name>
    <dbReference type="NCBI Taxonomy" id="272620"/>
    <lineage>
        <taxon>Bacteria</taxon>
        <taxon>Pseudomonadati</taxon>
        <taxon>Pseudomonadota</taxon>
        <taxon>Gammaproteobacteria</taxon>
        <taxon>Enterobacterales</taxon>
        <taxon>Enterobacteriaceae</taxon>
        <taxon>Klebsiella/Raoultella group</taxon>
        <taxon>Klebsiella</taxon>
        <taxon>Klebsiella pneumoniae complex</taxon>
    </lineage>
</organism>
<gene>
    <name evidence="1" type="primary">hscA</name>
    <name type="ordered locus">KPN78578_28070</name>
    <name type="ORF">KPN_02858</name>
</gene>
<name>HSCA_KLEP7</name>
<feature type="chain" id="PRO_1000044864" description="Chaperone protein HscA">
    <location>
        <begin position="1"/>
        <end position="616"/>
    </location>
</feature>
<evidence type="ECO:0000255" key="1">
    <source>
        <dbReference type="HAMAP-Rule" id="MF_00679"/>
    </source>
</evidence>
<protein>
    <recommendedName>
        <fullName evidence="1">Chaperone protein HscA</fullName>
    </recommendedName>
    <alternativeName>
        <fullName evidence="1">Hsc66</fullName>
    </alternativeName>
</protein>
<accession>A6TCE7</accession>
<dbReference type="EMBL" id="CP000647">
    <property type="protein sequence ID" value="ABR78268.1"/>
    <property type="molecule type" value="Genomic_DNA"/>
</dbReference>
<dbReference type="RefSeq" id="WP_004149343.1">
    <property type="nucleotide sequence ID" value="NC_009648.1"/>
</dbReference>
<dbReference type="SMR" id="A6TCE7"/>
<dbReference type="STRING" id="272620.KPN_02858"/>
<dbReference type="PaxDb" id="272620-KPN_02858"/>
<dbReference type="EnsemblBacteria" id="ABR78268">
    <property type="protein sequence ID" value="ABR78268"/>
    <property type="gene ID" value="KPN_02858"/>
</dbReference>
<dbReference type="KEGG" id="kpn:KPN_02858"/>
<dbReference type="HOGENOM" id="CLU_005965_2_1_6"/>
<dbReference type="Proteomes" id="UP000000265">
    <property type="component" value="Chromosome"/>
</dbReference>
<dbReference type="GO" id="GO:0005524">
    <property type="term" value="F:ATP binding"/>
    <property type="evidence" value="ECO:0007669"/>
    <property type="project" value="UniProtKB-KW"/>
</dbReference>
<dbReference type="GO" id="GO:0016887">
    <property type="term" value="F:ATP hydrolysis activity"/>
    <property type="evidence" value="ECO:0007669"/>
    <property type="project" value="UniProtKB-UniRule"/>
</dbReference>
<dbReference type="GO" id="GO:0140662">
    <property type="term" value="F:ATP-dependent protein folding chaperone"/>
    <property type="evidence" value="ECO:0007669"/>
    <property type="project" value="InterPro"/>
</dbReference>
<dbReference type="GO" id="GO:0051082">
    <property type="term" value="F:unfolded protein binding"/>
    <property type="evidence" value="ECO:0007669"/>
    <property type="project" value="InterPro"/>
</dbReference>
<dbReference type="GO" id="GO:0016226">
    <property type="term" value="P:iron-sulfur cluster assembly"/>
    <property type="evidence" value="ECO:0007669"/>
    <property type="project" value="InterPro"/>
</dbReference>
<dbReference type="CDD" id="cd10236">
    <property type="entry name" value="ASKHA_NBD_HSP70_HscA"/>
    <property type="match status" value="1"/>
</dbReference>
<dbReference type="FunFam" id="1.20.1270.10:FF:000006">
    <property type="entry name" value="Chaperone protein HscA"/>
    <property type="match status" value="1"/>
</dbReference>
<dbReference type="FunFam" id="3.30.420.40:FF:000046">
    <property type="entry name" value="Chaperone protein HscA"/>
    <property type="match status" value="1"/>
</dbReference>
<dbReference type="FunFam" id="3.90.640.10:FF:000013">
    <property type="entry name" value="Chaperone protein HscA"/>
    <property type="match status" value="1"/>
</dbReference>
<dbReference type="FunFam" id="2.60.34.10:FF:000005">
    <property type="entry name" value="Chaperone protein HscA homolog"/>
    <property type="match status" value="1"/>
</dbReference>
<dbReference type="Gene3D" id="1.20.1270.10">
    <property type="match status" value="1"/>
</dbReference>
<dbReference type="Gene3D" id="3.30.420.40">
    <property type="match status" value="2"/>
</dbReference>
<dbReference type="Gene3D" id="3.90.640.10">
    <property type="entry name" value="Actin, Chain A, domain 4"/>
    <property type="match status" value="1"/>
</dbReference>
<dbReference type="Gene3D" id="2.60.34.10">
    <property type="entry name" value="Substrate Binding Domain Of DNAk, Chain A, domain 1"/>
    <property type="match status" value="1"/>
</dbReference>
<dbReference type="HAMAP" id="MF_00679">
    <property type="entry name" value="HscA"/>
    <property type="match status" value="1"/>
</dbReference>
<dbReference type="InterPro" id="IPR043129">
    <property type="entry name" value="ATPase_NBD"/>
</dbReference>
<dbReference type="InterPro" id="IPR018181">
    <property type="entry name" value="Heat_shock_70_CS"/>
</dbReference>
<dbReference type="InterPro" id="IPR042039">
    <property type="entry name" value="HscA_NBD"/>
</dbReference>
<dbReference type="InterPro" id="IPR029048">
    <property type="entry name" value="HSP70_C_sf"/>
</dbReference>
<dbReference type="InterPro" id="IPR029047">
    <property type="entry name" value="HSP70_peptide-bd_sf"/>
</dbReference>
<dbReference type="InterPro" id="IPR013126">
    <property type="entry name" value="Hsp_70_fam"/>
</dbReference>
<dbReference type="InterPro" id="IPR010236">
    <property type="entry name" value="ISC_FeS_clus_asmbl_HscA"/>
</dbReference>
<dbReference type="NCBIfam" id="TIGR01991">
    <property type="entry name" value="HscA"/>
    <property type="match status" value="1"/>
</dbReference>
<dbReference type="NCBIfam" id="NF003520">
    <property type="entry name" value="PRK05183.1"/>
    <property type="match status" value="1"/>
</dbReference>
<dbReference type="PANTHER" id="PTHR19375">
    <property type="entry name" value="HEAT SHOCK PROTEIN 70KDA"/>
    <property type="match status" value="1"/>
</dbReference>
<dbReference type="Pfam" id="PF00012">
    <property type="entry name" value="HSP70"/>
    <property type="match status" value="1"/>
</dbReference>
<dbReference type="PRINTS" id="PR00301">
    <property type="entry name" value="HEATSHOCK70"/>
</dbReference>
<dbReference type="SUPFAM" id="SSF53067">
    <property type="entry name" value="Actin-like ATPase domain"/>
    <property type="match status" value="2"/>
</dbReference>
<dbReference type="SUPFAM" id="SSF100934">
    <property type="entry name" value="Heat shock protein 70kD (HSP70), C-terminal subdomain"/>
    <property type="match status" value="1"/>
</dbReference>
<dbReference type="SUPFAM" id="SSF100920">
    <property type="entry name" value="Heat shock protein 70kD (HSP70), peptide-binding domain"/>
    <property type="match status" value="1"/>
</dbReference>
<dbReference type="PROSITE" id="PS00297">
    <property type="entry name" value="HSP70_1"/>
    <property type="match status" value="1"/>
</dbReference>
<dbReference type="PROSITE" id="PS00329">
    <property type="entry name" value="HSP70_2"/>
    <property type="match status" value="1"/>
</dbReference>
<dbReference type="PROSITE" id="PS01036">
    <property type="entry name" value="HSP70_3"/>
    <property type="match status" value="1"/>
</dbReference>
<comment type="function">
    <text evidence="1">Chaperone involved in the maturation of iron-sulfur cluster-containing proteins. Has a low intrinsic ATPase activity which is markedly stimulated by HscB. Involved in the maturation of IscU.</text>
</comment>
<comment type="similarity">
    <text evidence="1">Belongs to the heat shock protein 70 family.</text>
</comment>
<reference key="1">
    <citation type="submission" date="2006-09" db="EMBL/GenBank/DDBJ databases">
        <authorList>
            <consortium name="The Klebsiella pneumonia Genome Sequencing Project"/>
            <person name="McClelland M."/>
            <person name="Sanderson E.K."/>
            <person name="Spieth J."/>
            <person name="Clifton W.S."/>
            <person name="Latreille P."/>
            <person name="Sabo A."/>
            <person name="Pepin K."/>
            <person name="Bhonagiri V."/>
            <person name="Porwollik S."/>
            <person name="Ali J."/>
            <person name="Wilson R.K."/>
        </authorList>
    </citation>
    <scope>NUCLEOTIDE SEQUENCE [LARGE SCALE GENOMIC DNA]</scope>
    <source>
        <strain>ATCC 700721 / MGH 78578</strain>
    </source>
</reference>
<keyword id="KW-0067">ATP-binding</keyword>
<keyword id="KW-0143">Chaperone</keyword>
<keyword id="KW-0547">Nucleotide-binding</keyword>
<sequence>MALLQISEPGLSAAPHQRRLAAGIDLGTTNSLVATVRSGQAETLPDHQGRYLLPSVVNYHASGLTVGYDARLNAAQDPANTISSVKRMMGRSLADIQNRYPHLPYQLQASENGLPMIQTAGGLLNPIRVSADILKALAARATEALAGELDGVVITVPAYFDDAQRQGTKDAARLAGLHVLRLLNEPTAAAIAYGLDSGQEGVIAVYDLGGGTFDISILRLSRGVFEVLATGGDSALGGDDFDHLLADYLREQAGFSDRSDNRLQRELLDAAIAAKIALSDAEAAHVEVGGWQGDITRSQFNDLIAPLVKRTLMACRRALKDAGVEAQEVLEVVMVGGSTRVPLVRERVGEFFGRTPLTSIDPDKVVAIGAAIQADILVGNKPDSELLLLDVIPLSLGLETMGGLVEKVIPRNTTIPVARAQEFTTFKDGQTAMSIHVMQGERELVQDCRSLARFALRGIPALPAGGAHIRVTFQVDADGLLSVTAMEKSTGVEASIQVKPSYGLTDGEIATMIKDSMSYAEQDIQARMLAEQKVEAARVLESLTSALAADAALLSAAERQAIDAAAEQVRAAAAGDDADAIKEAIKNIDTQTQEFAARRMDQSVRIALKGQSVDEV</sequence>